<protein>
    <recommendedName>
        <fullName>26S proteasome regulatory subunit 8</fullName>
    </recommendedName>
    <alternativeName>
        <fullName>26S proteasome AAA-ATPase subunit RPT6</fullName>
    </alternativeName>
    <alternativeName>
        <fullName>Proteasome 26S subunit ATPase 5</fullName>
    </alternativeName>
    <alternativeName>
        <fullName>Proteasome subunit p45</fullName>
    </alternativeName>
    <alternativeName>
        <fullName>Thyroid hormone receptor-interacting protein 1</fullName>
        <shortName>TRIP1</shortName>
    </alternativeName>
    <alternativeName>
        <fullName>p45/SUG</fullName>
    </alternativeName>
</protein>
<keyword id="KW-0002">3D-structure</keyword>
<keyword id="KW-0007">Acetylation</keyword>
<keyword id="KW-0067">ATP-binding</keyword>
<keyword id="KW-0963">Cytoplasm</keyword>
<keyword id="KW-0547">Nucleotide-binding</keyword>
<keyword id="KW-0539">Nucleus</keyword>
<keyword id="KW-0597">Phosphoprotein</keyword>
<keyword id="KW-0647">Proteasome</keyword>
<keyword id="KW-1185">Reference proteome</keyword>
<dbReference type="EMBL" id="D83521">
    <property type="protein sequence ID" value="BAA11938.1"/>
    <property type="molecule type" value="mRNA"/>
</dbReference>
<dbReference type="EMBL" id="AB000491">
    <property type="protein sequence ID" value="BAA22933.1"/>
    <property type="molecule type" value="mRNA"/>
</dbReference>
<dbReference type="EMBL" id="AB000493">
    <property type="protein sequence ID" value="BAA22935.1"/>
    <property type="molecule type" value="Genomic_DNA"/>
</dbReference>
<dbReference type="EMBL" id="BC058462">
    <property type="protein sequence ID" value="AAH58462.1"/>
    <property type="molecule type" value="mRNA"/>
</dbReference>
<dbReference type="PIR" id="T43799">
    <property type="entry name" value="T43799"/>
</dbReference>
<dbReference type="RefSeq" id="NP_112411.1">
    <property type="nucleotide sequence ID" value="NM_031149.1"/>
</dbReference>
<dbReference type="PDB" id="6EPC">
    <property type="method" value="EM"/>
    <property type="resolution" value="12.30 A"/>
    <property type="chains" value="J=1-406"/>
</dbReference>
<dbReference type="PDB" id="6EPD">
    <property type="method" value="EM"/>
    <property type="resolution" value="15.40 A"/>
    <property type="chains" value="J=1-406"/>
</dbReference>
<dbReference type="PDB" id="6EPE">
    <property type="method" value="EM"/>
    <property type="resolution" value="12.80 A"/>
    <property type="chains" value="J=1-406"/>
</dbReference>
<dbReference type="PDB" id="6EPF">
    <property type="method" value="EM"/>
    <property type="resolution" value="11.80 A"/>
    <property type="chains" value="J=1-406"/>
</dbReference>
<dbReference type="PDBsum" id="6EPC"/>
<dbReference type="PDBsum" id="6EPD"/>
<dbReference type="PDBsum" id="6EPE"/>
<dbReference type="PDBsum" id="6EPF"/>
<dbReference type="EMDB" id="EMD-3913"/>
<dbReference type="EMDB" id="EMD-3914"/>
<dbReference type="EMDB" id="EMD-3915"/>
<dbReference type="EMDB" id="EMD-3916"/>
<dbReference type="SMR" id="P62198"/>
<dbReference type="BioGRID" id="249685">
    <property type="interactions" value="20"/>
</dbReference>
<dbReference type="ComplexPortal" id="CPX-8962">
    <property type="entry name" value="19S proteasome regulatory complex"/>
</dbReference>
<dbReference type="ComplexPortal" id="CPX-8965">
    <property type="entry name" value="30S proteasome complex"/>
</dbReference>
<dbReference type="FunCoup" id="P62198">
    <property type="interactions" value="3119"/>
</dbReference>
<dbReference type="IntAct" id="P62198">
    <property type="interactions" value="6"/>
</dbReference>
<dbReference type="STRING" id="10116.ENSRNOP00000013997"/>
<dbReference type="iPTMnet" id="P62198"/>
<dbReference type="PhosphoSitePlus" id="P62198"/>
<dbReference type="jPOST" id="P62198"/>
<dbReference type="PaxDb" id="10116-ENSRNOP00000013997"/>
<dbReference type="Ensembl" id="ENSRNOT00000118001.1">
    <property type="protein sequence ID" value="ENSRNOP00000079284.1"/>
    <property type="gene ID" value="ENSRNOG00000010038.7"/>
</dbReference>
<dbReference type="GeneID" id="81827"/>
<dbReference type="KEGG" id="rno:81827"/>
<dbReference type="UCSC" id="RGD:708376">
    <property type="organism name" value="rat"/>
</dbReference>
<dbReference type="AGR" id="RGD:708376"/>
<dbReference type="CTD" id="5705"/>
<dbReference type="RGD" id="708376">
    <property type="gene designation" value="Psmc5"/>
</dbReference>
<dbReference type="eggNOG" id="KOG0728">
    <property type="taxonomic scope" value="Eukaryota"/>
</dbReference>
<dbReference type="GeneTree" id="ENSGT01020000230346"/>
<dbReference type="HOGENOM" id="CLU_000688_2_0_1"/>
<dbReference type="InParanoid" id="P62198"/>
<dbReference type="OrthoDB" id="39062at9989"/>
<dbReference type="PhylomeDB" id="P62198"/>
<dbReference type="Reactome" id="R-RNO-1169091">
    <property type="pathway name" value="Activation of NF-kappaB in B cells"/>
</dbReference>
<dbReference type="Reactome" id="R-RNO-1234176">
    <property type="pathway name" value="Oxygen-dependent proline hydroxylation of Hypoxia-inducible Factor Alpha"/>
</dbReference>
<dbReference type="Reactome" id="R-RNO-1236978">
    <property type="pathway name" value="Cross-presentation of soluble exogenous antigens (endosomes)"/>
</dbReference>
<dbReference type="Reactome" id="R-RNO-174084">
    <property type="pathway name" value="Autodegradation of Cdh1 by Cdh1:APC/C"/>
</dbReference>
<dbReference type="Reactome" id="R-RNO-174113">
    <property type="pathway name" value="SCF-beta-TrCP mediated degradation of Emi1"/>
</dbReference>
<dbReference type="Reactome" id="R-RNO-174154">
    <property type="pathway name" value="APC/C:Cdc20 mediated degradation of Securin"/>
</dbReference>
<dbReference type="Reactome" id="R-RNO-174178">
    <property type="pathway name" value="APC/C:Cdh1 mediated degradation of Cdc20 and other APC/C:Cdh1 targeted proteins in late mitosis/early G1"/>
</dbReference>
<dbReference type="Reactome" id="R-RNO-174184">
    <property type="pathway name" value="Cdc20:Phospho-APC/C mediated degradation of Cyclin A"/>
</dbReference>
<dbReference type="Reactome" id="R-RNO-187577">
    <property type="pathway name" value="SCF(Skp2)-mediated degradation of p27/p21"/>
</dbReference>
<dbReference type="Reactome" id="R-RNO-195253">
    <property type="pathway name" value="Degradation of beta-catenin by the destruction complex"/>
</dbReference>
<dbReference type="Reactome" id="R-RNO-2467813">
    <property type="pathway name" value="Separation of Sister Chromatids"/>
</dbReference>
<dbReference type="Reactome" id="R-RNO-349425">
    <property type="pathway name" value="Autodegradation of the E3 ubiquitin ligase COP1"/>
</dbReference>
<dbReference type="Reactome" id="R-RNO-350562">
    <property type="pathway name" value="Regulation of ornithine decarboxylase (ODC)"/>
</dbReference>
<dbReference type="Reactome" id="R-RNO-382556">
    <property type="pathway name" value="ABC-family proteins mediated transport"/>
</dbReference>
<dbReference type="Reactome" id="R-RNO-450408">
    <property type="pathway name" value="AUF1 (hnRNP D0) binds and destabilizes mRNA"/>
</dbReference>
<dbReference type="Reactome" id="R-RNO-4608870">
    <property type="pathway name" value="Asymmetric localization of PCP proteins"/>
</dbReference>
<dbReference type="Reactome" id="R-RNO-4641257">
    <property type="pathway name" value="Degradation of AXIN"/>
</dbReference>
<dbReference type="Reactome" id="R-RNO-4641258">
    <property type="pathway name" value="Degradation of DVL"/>
</dbReference>
<dbReference type="Reactome" id="R-RNO-5358346">
    <property type="pathway name" value="Hedgehog ligand biogenesis"/>
</dbReference>
<dbReference type="Reactome" id="R-RNO-5607761">
    <property type="pathway name" value="Dectin-1 mediated noncanonical NF-kB signaling"/>
</dbReference>
<dbReference type="Reactome" id="R-RNO-5610780">
    <property type="pathway name" value="Degradation of GLI1 by the proteasome"/>
</dbReference>
<dbReference type="Reactome" id="R-RNO-5610785">
    <property type="pathway name" value="GLI3 is processed to GLI3R by the proteasome"/>
</dbReference>
<dbReference type="Reactome" id="R-RNO-5632684">
    <property type="pathway name" value="Hedgehog 'on' state"/>
</dbReference>
<dbReference type="Reactome" id="R-RNO-5658442">
    <property type="pathway name" value="Regulation of RAS by GAPs"/>
</dbReference>
<dbReference type="Reactome" id="R-RNO-5668541">
    <property type="pathway name" value="TNFR2 non-canonical NF-kB pathway"/>
</dbReference>
<dbReference type="Reactome" id="R-RNO-5676590">
    <property type="pathway name" value="NIK--&gt;noncanonical NF-kB signaling"/>
</dbReference>
<dbReference type="Reactome" id="R-RNO-5687128">
    <property type="pathway name" value="MAPK6/MAPK4 signaling"/>
</dbReference>
<dbReference type="Reactome" id="R-RNO-5689603">
    <property type="pathway name" value="UCH proteinases"/>
</dbReference>
<dbReference type="Reactome" id="R-RNO-5689880">
    <property type="pathway name" value="Ub-specific processing proteases"/>
</dbReference>
<dbReference type="Reactome" id="R-RNO-68867">
    <property type="pathway name" value="Assembly of the pre-replicative complex"/>
</dbReference>
<dbReference type="Reactome" id="R-RNO-68949">
    <property type="pathway name" value="Orc1 removal from chromatin"/>
</dbReference>
<dbReference type="Reactome" id="R-RNO-69017">
    <property type="pathway name" value="CDK-mediated phosphorylation and removal of Cdc6"/>
</dbReference>
<dbReference type="Reactome" id="R-RNO-69481">
    <property type="pathway name" value="G2/M Checkpoints"/>
</dbReference>
<dbReference type="Reactome" id="R-RNO-69601">
    <property type="pathway name" value="Ubiquitin Mediated Degradation of Phosphorylated Cdc25A"/>
</dbReference>
<dbReference type="Reactome" id="R-RNO-75815">
    <property type="pathway name" value="Ubiquitin-dependent degradation of Cyclin D"/>
</dbReference>
<dbReference type="Reactome" id="R-RNO-8852276">
    <property type="pathway name" value="The role of GTSE1 in G2/M progression after G2 checkpoint"/>
</dbReference>
<dbReference type="Reactome" id="R-RNO-8854050">
    <property type="pathway name" value="FBXL7 down-regulates AURKA during mitotic entry and in early mitosis"/>
</dbReference>
<dbReference type="Reactome" id="R-RNO-8939236">
    <property type="pathway name" value="RUNX1 regulates transcription of genes involved in differentiation of HSCs"/>
</dbReference>
<dbReference type="Reactome" id="R-RNO-8941858">
    <property type="pathway name" value="Regulation of RUNX3 expression and activity"/>
</dbReference>
<dbReference type="Reactome" id="R-RNO-8948751">
    <property type="pathway name" value="Regulation of PTEN stability and activity"/>
</dbReference>
<dbReference type="Reactome" id="R-RNO-8951664">
    <property type="pathway name" value="Neddylation"/>
</dbReference>
<dbReference type="Reactome" id="R-RNO-9755511">
    <property type="pathway name" value="KEAP1-NFE2L2 pathway"/>
</dbReference>
<dbReference type="Reactome" id="R-RNO-9762114">
    <property type="pathway name" value="GSK3B and BTRC:CUL1-mediated-degradation of NFE2L2"/>
</dbReference>
<dbReference type="Reactome" id="R-RNO-983168">
    <property type="pathway name" value="Antigen processing: Ubiquitination &amp; Proteasome degradation"/>
</dbReference>
<dbReference type="Reactome" id="R-RNO-9907900">
    <property type="pathway name" value="Proteasome assembly"/>
</dbReference>
<dbReference type="PRO" id="PR:P62198"/>
<dbReference type="Proteomes" id="UP000002494">
    <property type="component" value="Chromosome 10"/>
</dbReference>
<dbReference type="Bgee" id="ENSRNOG00000010038">
    <property type="expression patterns" value="Expressed in frontal cortex and 20 other cell types or tissues"/>
</dbReference>
<dbReference type="GO" id="GO:0005737">
    <property type="term" value="C:cytoplasm"/>
    <property type="evidence" value="ECO:0000250"/>
    <property type="project" value="UniProtKB"/>
</dbReference>
<dbReference type="GO" id="GO:0031410">
    <property type="term" value="C:cytoplasmic vesicle"/>
    <property type="evidence" value="ECO:0000266"/>
    <property type="project" value="RGD"/>
</dbReference>
<dbReference type="GO" id="GO:0031597">
    <property type="term" value="C:cytosolic proteasome complex"/>
    <property type="evidence" value="ECO:0000314"/>
    <property type="project" value="RGD"/>
</dbReference>
<dbReference type="GO" id="GO:0016234">
    <property type="term" value="C:inclusion body"/>
    <property type="evidence" value="ECO:0000314"/>
    <property type="project" value="RGD"/>
</dbReference>
<dbReference type="GO" id="GO:0031595">
    <property type="term" value="C:nuclear proteasome complex"/>
    <property type="evidence" value="ECO:0000314"/>
    <property type="project" value="RGD"/>
</dbReference>
<dbReference type="GO" id="GO:0005634">
    <property type="term" value="C:nucleus"/>
    <property type="evidence" value="ECO:0000250"/>
    <property type="project" value="UniProtKB"/>
</dbReference>
<dbReference type="GO" id="GO:0022624">
    <property type="term" value="C:proteasome accessory complex"/>
    <property type="evidence" value="ECO:0000250"/>
    <property type="project" value="UniProtKB"/>
</dbReference>
<dbReference type="GO" id="GO:0000502">
    <property type="term" value="C:proteasome complex"/>
    <property type="evidence" value="ECO:0000250"/>
    <property type="project" value="UniProtKB"/>
</dbReference>
<dbReference type="GO" id="GO:0005838">
    <property type="term" value="C:proteasome regulatory particle"/>
    <property type="evidence" value="ECO:0000266"/>
    <property type="project" value="RGD"/>
</dbReference>
<dbReference type="GO" id="GO:0008540">
    <property type="term" value="C:proteasome regulatory particle, base subcomplex"/>
    <property type="evidence" value="ECO:0000318"/>
    <property type="project" value="GO_Central"/>
</dbReference>
<dbReference type="GO" id="GO:0005524">
    <property type="term" value="F:ATP binding"/>
    <property type="evidence" value="ECO:0007669"/>
    <property type="project" value="UniProtKB-KW"/>
</dbReference>
<dbReference type="GO" id="GO:0016887">
    <property type="term" value="F:ATP hydrolysis activity"/>
    <property type="evidence" value="ECO:0000314"/>
    <property type="project" value="RGD"/>
</dbReference>
<dbReference type="GO" id="GO:0140297">
    <property type="term" value="F:DNA-binding transcription factor binding"/>
    <property type="evidence" value="ECO:0000266"/>
    <property type="project" value="RGD"/>
</dbReference>
<dbReference type="GO" id="GO:0140296">
    <property type="term" value="F:general transcription initiation factor binding"/>
    <property type="evidence" value="ECO:0000250"/>
    <property type="project" value="UniProtKB"/>
</dbReference>
<dbReference type="GO" id="GO:0036402">
    <property type="term" value="F:proteasome-activating activity"/>
    <property type="evidence" value="ECO:0000318"/>
    <property type="project" value="GO_Central"/>
</dbReference>
<dbReference type="GO" id="GO:0005102">
    <property type="term" value="F:signaling receptor binding"/>
    <property type="evidence" value="ECO:0000266"/>
    <property type="project" value="RGD"/>
</dbReference>
<dbReference type="GO" id="GO:0017025">
    <property type="term" value="F:TBP-class protein binding"/>
    <property type="evidence" value="ECO:0000353"/>
    <property type="project" value="RGD"/>
</dbReference>
<dbReference type="GO" id="GO:0031531">
    <property type="term" value="F:thyrotropin-releasing hormone receptor binding"/>
    <property type="evidence" value="ECO:0000250"/>
    <property type="project" value="UniProtKB"/>
</dbReference>
<dbReference type="GO" id="GO:0045892">
    <property type="term" value="P:negative regulation of DNA-templated transcription"/>
    <property type="evidence" value="ECO:0000266"/>
    <property type="project" value="RGD"/>
</dbReference>
<dbReference type="GO" id="GO:0090261">
    <property type="term" value="P:positive regulation of inclusion body assembly"/>
    <property type="evidence" value="ECO:0000315"/>
    <property type="project" value="RGD"/>
</dbReference>
<dbReference type="GO" id="GO:0043161">
    <property type="term" value="P:proteasome-mediated ubiquitin-dependent protein catabolic process"/>
    <property type="evidence" value="ECO:0000250"/>
    <property type="project" value="UniProtKB"/>
</dbReference>
<dbReference type="GO" id="GO:0006357">
    <property type="term" value="P:regulation of transcription by RNA polymerase II"/>
    <property type="evidence" value="ECO:0000266"/>
    <property type="project" value="RGD"/>
</dbReference>
<dbReference type="CDD" id="cd19502">
    <property type="entry name" value="RecA-like_PAN_like"/>
    <property type="match status" value="1"/>
</dbReference>
<dbReference type="FunFam" id="1.10.8.60:FF:000006">
    <property type="entry name" value="26S protease regulatory subunit 8"/>
    <property type="match status" value="1"/>
</dbReference>
<dbReference type="FunFam" id="2.40.50.140:FF:000044">
    <property type="entry name" value="26S protease regulatory subunit 8"/>
    <property type="match status" value="1"/>
</dbReference>
<dbReference type="FunFam" id="3.40.50.300:FF:000030">
    <property type="entry name" value="26S protease regulatory subunit 8"/>
    <property type="match status" value="1"/>
</dbReference>
<dbReference type="Gene3D" id="1.10.8.60">
    <property type="match status" value="1"/>
</dbReference>
<dbReference type="Gene3D" id="2.40.50.140">
    <property type="entry name" value="Nucleic acid-binding proteins"/>
    <property type="match status" value="1"/>
</dbReference>
<dbReference type="Gene3D" id="3.40.50.300">
    <property type="entry name" value="P-loop containing nucleotide triphosphate hydrolases"/>
    <property type="match status" value="1"/>
</dbReference>
<dbReference type="InterPro" id="IPR050221">
    <property type="entry name" value="26S_Proteasome_ATPase"/>
</dbReference>
<dbReference type="InterPro" id="IPR003593">
    <property type="entry name" value="AAA+_ATPase"/>
</dbReference>
<dbReference type="InterPro" id="IPR041569">
    <property type="entry name" value="AAA_lid_3"/>
</dbReference>
<dbReference type="InterPro" id="IPR003959">
    <property type="entry name" value="ATPase_AAA_core"/>
</dbReference>
<dbReference type="InterPro" id="IPR003960">
    <property type="entry name" value="ATPase_AAA_CS"/>
</dbReference>
<dbReference type="InterPro" id="IPR012340">
    <property type="entry name" value="NA-bd_OB-fold"/>
</dbReference>
<dbReference type="InterPro" id="IPR027417">
    <property type="entry name" value="P-loop_NTPase"/>
</dbReference>
<dbReference type="InterPro" id="IPR032501">
    <property type="entry name" value="Prot_ATP_ID_OB_2nd"/>
</dbReference>
<dbReference type="PANTHER" id="PTHR23073">
    <property type="entry name" value="26S PROTEASOME REGULATORY SUBUNIT"/>
    <property type="match status" value="1"/>
</dbReference>
<dbReference type="Pfam" id="PF00004">
    <property type="entry name" value="AAA"/>
    <property type="match status" value="1"/>
</dbReference>
<dbReference type="Pfam" id="PF17862">
    <property type="entry name" value="AAA_lid_3"/>
    <property type="match status" value="1"/>
</dbReference>
<dbReference type="Pfam" id="PF16450">
    <property type="entry name" value="Prot_ATP_ID_OB_C"/>
    <property type="match status" value="1"/>
</dbReference>
<dbReference type="SMART" id="SM00382">
    <property type="entry name" value="AAA"/>
    <property type="match status" value="1"/>
</dbReference>
<dbReference type="SUPFAM" id="SSF52540">
    <property type="entry name" value="P-loop containing nucleoside triphosphate hydrolases"/>
    <property type="match status" value="1"/>
</dbReference>
<dbReference type="PROSITE" id="PS00674">
    <property type="entry name" value="AAA"/>
    <property type="match status" value="1"/>
</dbReference>
<reference key="1">
    <citation type="journal article" date="1996" name="Biochem. Biophys. Res. Commun.">
        <title>Structures of the rat proteasomal ATPases: determination of highly conserved structural motifs and rules for their spacing.</title>
        <authorList>
            <person name="Makino Y."/>
            <person name="Yogosawa S."/>
            <person name="Kanemaki M."/>
            <person name="Yoshida T."/>
            <person name="Yamano K."/>
            <person name="Kishimoto T."/>
            <person name="Moncollin V."/>
            <person name="Egly J.-M."/>
            <person name="Muramatsu M."/>
            <person name="Tamura T."/>
        </authorList>
    </citation>
    <scope>NUCLEOTIDE SEQUENCE [MRNA]</scope>
    <source>
        <tissue>Liver</tissue>
    </source>
</reference>
<reference key="2">
    <citation type="journal article" date="1997" name="Gene">
        <title>Gene coding for the transcription factor, SUG/proteasome, p45 is located nearly 40 kb downstream from the rat growth hormone gene.</title>
        <authorList>
            <person name="Kazahari K."/>
            <person name="Nomoto K."/>
            <person name="Nakazato S."/>
            <person name="Ono M."/>
        </authorList>
    </citation>
    <scope>NUCLEOTIDE SEQUENCE [GENOMIC DNA / MRNA]</scope>
    <source>
        <strain>Wistar</strain>
        <tissue>Brain</tissue>
    </source>
</reference>
<reference key="3">
    <citation type="journal article" date="2004" name="Genome Res.">
        <title>The status, quality, and expansion of the NIH full-length cDNA project: the Mammalian Gene Collection (MGC).</title>
        <authorList>
            <consortium name="The MGC Project Team"/>
        </authorList>
    </citation>
    <scope>NUCLEOTIDE SEQUENCE [LARGE SCALE MRNA]</scope>
    <source>
        <tissue>Pituitary</tissue>
    </source>
</reference>
<reference key="4">
    <citation type="journal article" date="1995" name="Mol. Endocrinol.">
        <title>Two classes of proteins dependent on either the presence or absence of thyroid hormone for interaction with the thyroid hormone receptor.</title>
        <authorList>
            <person name="Lee J.W."/>
            <person name="Choi H.-S."/>
            <person name="Gyuris J."/>
            <person name="Brent R."/>
            <person name="Moore D.D."/>
        </authorList>
    </citation>
    <scope>INTERACTION WITH THYROID HORMONE RECEPTOR</scope>
</reference>
<proteinExistence type="evidence at protein level"/>
<name>PRS8_RAT</name>
<accession>P62198</accession>
<accession>O35051</accession>
<accession>P47210</accession>
<accession>P52915</accession>
<accession>P52916</accession>
<evidence type="ECO:0000250" key="1">
    <source>
        <dbReference type="UniProtKB" id="P62195"/>
    </source>
</evidence>
<evidence type="ECO:0000250" key="2">
    <source>
        <dbReference type="UniProtKB" id="P62196"/>
    </source>
</evidence>
<evidence type="ECO:0000255" key="3"/>
<evidence type="ECO:0000269" key="4">
    <source>
    </source>
</evidence>
<evidence type="ECO:0000305" key="5"/>
<organism>
    <name type="scientific">Rattus norvegicus</name>
    <name type="common">Rat</name>
    <dbReference type="NCBI Taxonomy" id="10116"/>
    <lineage>
        <taxon>Eukaryota</taxon>
        <taxon>Metazoa</taxon>
        <taxon>Chordata</taxon>
        <taxon>Craniata</taxon>
        <taxon>Vertebrata</taxon>
        <taxon>Euteleostomi</taxon>
        <taxon>Mammalia</taxon>
        <taxon>Eutheria</taxon>
        <taxon>Euarchontoglires</taxon>
        <taxon>Glires</taxon>
        <taxon>Rodentia</taxon>
        <taxon>Myomorpha</taxon>
        <taxon>Muroidea</taxon>
        <taxon>Muridae</taxon>
        <taxon>Murinae</taxon>
        <taxon>Rattus</taxon>
    </lineage>
</organism>
<feature type="initiator methionine" description="Removed" evidence="1">
    <location>
        <position position="1"/>
    </location>
</feature>
<feature type="chain" id="PRO_0000084724" description="26S proteasome regulatory subunit 8">
    <location>
        <begin position="2"/>
        <end position="406"/>
    </location>
</feature>
<feature type="region of interest" description="May mediate interaction with PRPF9" evidence="2">
    <location>
        <begin position="186"/>
        <end position="406"/>
    </location>
</feature>
<feature type="binding site" evidence="3">
    <location>
        <begin position="190"/>
        <end position="197"/>
    </location>
    <ligand>
        <name>ATP</name>
        <dbReference type="ChEBI" id="CHEBI:30616"/>
    </ligand>
</feature>
<feature type="modified residue" description="N-acetylalanine" evidence="1">
    <location>
        <position position="2"/>
    </location>
</feature>
<feature type="modified residue" description="Phosphoserine" evidence="1">
    <location>
        <position position="120"/>
    </location>
</feature>
<feature type="modified residue" description="N6-acetyllysine" evidence="1">
    <location>
        <position position="222"/>
    </location>
</feature>
<comment type="function">
    <text evidence="1">Component of the 26S proteasome, a multiprotein complex involved in the ATP-dependent degradation of ubiquitinated proteins. This complex plays a key role in the maintenance of protein homeostasis by removing misfolded or damaged proteins, which could impair cellular functions, and by removing proteins whose functions are no longer required. Therefore, the proteasome participates in numerous cellular processes, including cell cycle progression, apoptosis, or DNA damage repair. PSMC5 belongs to the heterohexameric ring of AAA (ATPases associated with diverse cellular activities) proteins that unfolds ubiquitinated target proteins that are concurrently translocated into a proteolytic chamber and degraded into peptides.</text>
</comment>
<comment type="subunit">
    <text evidence="1 2 4">Component of the 19S proteasome regulatory particle complex (By similarity). The 26S proteasome consists of a 20S core particle (CP) and two 19S regulatory subunits (RP) (By similarity). The regulatory particle is made of a lid composed of 9 subunits, a base containing 6 ATPases including PSMC5 and few additional components (By similarity). Component of a complex with USP49 and RUVBL1 (By similarity). Interacts with PRPF19 (By similarity). Interacts with TRIM5 (By similarity). Interacts with NDC80 (By similarity). Interacts with PAAF1 (By similarity). Interacts, in vitro, with the thyroid hormone receptor (in a thyroid hormone T3-dependent manner) and with retinoid X receptor (RXR) (PubMed:7776974). Interacts with ERCC6 (By similarity).</text>
</comment>
<comment type="subcellular location">
    <subcellularLocation>
        <location evidence="1">Cytoplasm</location>
    </subcellularLocation>
    <subcellularLocation>
        <location evidence="1">Nucleus</location>
    </subcellularLocation>
</comment>
<comment type="similarity">
    <text evidence="5">Belongs to the AAA ATPase family.</text>
</comment>
<gene>
    <name type="primary">Psmc5</name>
    <name type="synonym">Sug1</name>
</gene>
<sequence length="406" mass="45626">MALDGPEQMELEEGKAGSGLRQYYLSKIEELQLIVNDKSQNLRRLQAQRNELNAKVRLLREELQLLQEQGSYVGEVVRAMDKKKVLVKVHPEGKFVVDVDKNIDINDVTPNCRVALRNDSYTLHKILPNKVDPLVSLMMVEKVPDSTYEMIGGLDKQIKEIKEVIELPVKHPELFEALGIAQPKGVLLYGPPGTGKTLLARAVAHHTDCTFIRVSGSELVQKFIGEGARMVRELFVMAREHAPSIIFMDEIDSIGSSRLEGGSGGDSEVQRTMLELLNQLDGFEATKNIKVIMATNRIDILDSALLRPGRIDRKIEFPPPNEEARLDILKIHSRKMNLTRGINLRKIAELMPGASGAEVKGVCTEAGMYALRERRVHVTQEDFEMAVAKVMQKDSEKNMSIKKLWK</sequence>